<reference key="1">
    <citation type="journal article" date="2004" name="Virology">
        <title>Genetic analysis of human H2N2 and early H3N2 influenza viruses, 1957-1972: evidence for genetic divergence and multiple reassortment events.</title>
        <authorList>
            <person name="Lindstrom S.E."/>
            <person name="Cox N.J."/>
            <person name="Klimov A."/>
        </authorList>
    </citation>
    <scope>NUCLEOTIDE SEQUENCE [GENOMIC RNA]</scope>
</reference>
<comment type="function">
    <text evidence="1">RNA-dependent RNA polymerase which is responsible for replication and transcription of virus RNA segments. The transcription of viral mRNAs occurs by a unique mechanism called cap-snatching. 5' methylated caps of cellular mRNAs are cleaved after 10-13 nucleotides by PA. In turn, these short capped RNAs are used as primers by PB1 for transcription of viral mRNAs. During virus replication, PB1 initiates RNA synthesis and copy vRNA into complementary RNA (cRNA) which in turn serves as a template for the production of more vRNAs.</text>
</comment>
<comment type="catalytic activity">
    <reaction evidence="1">
        <text>RNA(n) + a ribonucleoside 5'-triphosphate = RNA(n+1) + diphosphate</text>
        <dbReference type="Rhea" id="RHEA:21248"/>
        <dbReference type="Rhea" id="RHEA-COMP:14527"/>
        <dbReference type="Rhea" id="RHEA-COMP:17342"/>
        <dbReference type="ChEBI" id="CHEBI:33019"/>
        <dbReference type="ChEBI" id="CHEBI:61557"/>
        <dbReference type="ChEBI" id="CHEBI:140395"/>
        <dbReference type="EC" id="2.7.7.48"/>
    </reaction>
</comment>
<comment type="subunit">
    <text evidence="1">Influenza RNA polymerase is composed of three subunits: PB1, PB2 and PA. Interacts (via N-terminus) with PA (via C-terminus). Interacts (via C-terminus) with PB2 (via N-terminus); this interaction is essential for transcription initiation.</text>
</comment>
<comment type="subcellular location">
    <subcellularLocation>
        <location evidence="1">Host nucleus</location>
    </subcellularLocation>
    <subcellularLocation>
        <location evidence="1">Host cytoplasm</location>
    </subcellularLocation>
</comment>
<comment type="PTM">
    <text evidence="1">Phosphorylated by host PRKCA.</text>
</comment>
<comment type="similarity">
    <text evidence="1">Belongs to the influenza viruses polymerase PB1 family.</text>
</comment>
<gene>
    <name evidence="1" type="primary">PB1</name>
</gene>
<dbReference type="EC" id="2.7.7.48" evidence="1"/>
<dbReference type="EMBL" id="AY210278">
    <property type="protein sequence ID" value="AAO46560.1"/>
    <property type="molecule type" value="Genomic_RNA"/>
</dbReference>
<dbReference type="SMR" id="Q6XT02"/>
<dbReference type="GO" id="GO:0030430">
    <property type="term" value="C:host cell cytoplasm"/>
    <property type="evidence" value="ECO:0007669"/>
    <property type="project" value="UniProtKB-SubCell"/>
</dbReference>
<dbReference type="GO" id="GO:0042025">
    <property type="term" value="C:host cell nucleus"/>
    <property type="evidence" value="ECO:0007669"/>
    <property type="project" value="UniProtKB-SubCell"/>
</dbReference>
<dbReference type="GO" id="GO:0000166">
    <property type="term" value="F:nucleotide binding"/>
    <property type="evidence" value="ECO:0007669"/>
    <property type="project" value="UniProtKB-UniRule"/>
</dbReference>
<dbReference type="GO" id="GO:0003723">
    <property type="term" value="F:RNA binding"/>
    <property type="evidence" value="ECO:0007669"/>
    <property type="project" value="InterPro"/>
</dbReference>
<dbReference type="GO" id="GO:0003968">
    <property type="term" value="F:RNA-directed RNA polymerase activity"/>
    <property type="evidence" value="ECO:0007669"/>
    <property type="project" value="UniProtKB-UniRule"/>
</dbReference>
<dbReference type="GO" id="GO:0006351">
    <property type="term" value="P:DNA-templated transcription"/>
    <property type="evidence" value="ECO:0007669"/>
    <property type="project" value="UniProtKB-UniRule"/>
</dbReference>
<dbReference type="GO" id="GO:0039657">
    <property type="term" value="P:symbiont-mediated suppression of host gene expression"/>
    <property type="evidence" value="ECO:0007669"/>
    <property type="project" value="UniProtKB-KW"/>
</dbReference>
<dbReference type="GO" id="GO:0039523">
    <property type="term" value="P:symbiont-mediated suppression of host mRNA transcription via inhibition of RNA polymerase II activity"/>
    <property type="evidence" value="ECO:0007669"/>
    <property type="project" value="UniProtKB-UniRule"/>
</dbReference>
<dbReference type="GO" id="GO:0039694">
    <property type="term" value="P:viral RNA genome replication"/>
    <property type="evidence" value="ECO:0007669"/>
    <property type="project" value="UniProtKB-UniRule"/>
</dbReference>
<dbReference type="GO" id="GO:0019083">
    <property type="term" value="P:viral transcription"/>
    <property type="evidence" value="ECO:0007669"/>
    <property type="project" value="UniProtKB-KW"/>
</dbReference>
<dbReference type="Gene3D" id="6.10.140.720">
    <property type="match status" value="1"/>
</dbReference>
<dbReference type="HAMAP" id="MF_04065">
    <property type="entry name" value="INFV_RDRP"/>
    <property type="match status" value="1"/>
</dbReference>
<dbReference type="InterPro" id="IPR007099">
    <property type="entry name" value="RNA-dir_pol_NSvirus"/>
</dbReference>
<dbReference type="InterPro" id="IPR001407">
    <property type="entry name" value="RNA_pol_PB1_influenza"/>
</dbReference>
<dbReference type="Pfam" id="PF00602">
    <property type="entry name" value="Flu_PB1"/>
    <property type="match status" value="1"/>
</dbReference>
<dbReference type="PIRSF" id="PIRSF000827">
    <property type="entry name" value="RdRPol_OMV"/>
    <property type="match status" value="1"/>
</dbReference>
<dbReference type="PROSITE" id="PS50525">
    <property type="entry name" value="RDRP_SSRNA_NEG_SEG"/>
    <property type="match status" value="1"/>
</dbReference>
<organism>
    <name type="scientific">Influenza A virus (strain A/Qu/7/1970 H3N2)</name>
    <dbReference type="NCBI Taxonomy" id="221016"/>
    <lineage>
        <taxon>Viruses</taxon>
        <taxon>Riboviria</taxon>
        <taxon>Orthornavirae</taxon>
        <taxon>Negarnaviricota</taxon>
        <taxon>Polyploviricotina</taxon>
        <taxon>Insthoviricetes</taxon>
        <taxon>Articulavirales</taxon>
        <taxon>Orthomyxoviridae</taxon>
        <taxon>Alphainfluenzavirus</taxon>
        <taxon>Alphainfluenzavirus influenzae</taxon>
        <taxon>Influenza A virus</taxon>
    </lineage>
</organism>
<protein>
    <recommendedName>
        <fullName evidence="1">RNA-directed RNA polymerase catalytic subunit</fullName>
        <ecNumber evidence="1">2.7.7.48</ecNumber>
    </recommendedName>
    <alternativeName>
        <fullName evidence="1">Polymerase basic protein 1</fullName>
        <shortName evidence="1">PB1</shortName>
    </alternativeName>
    <alternativeName>
        <fullName evidence="1">RNA-directed RNA polymerase subunit P1</fullName>
    </alternativeName>
</protein>
<feature type="chain" id="PRO_0000279610" description="RNA-directed RNA polymerase catalytic subunit">
    <location>
        <begin position="1"/>
        <end position="757"/>
    </location>
</feature>
<feature type="domain" description="RdRp catalytic" evidence="1">
    <location>
        <begin position="286"/>
        <end position="483"/>
    </location>
</feature>
<feature type="region of interest" description="Disordered" evidence="2">
    <location>
        <begin position="50"/>
        <end position="82"/>
    </location>
</feature>
<feature type="region of interest" description="Promoter-binding site" evidence="1">
    <location>
        <begin position="249"/>
        <end position="256"/>
    </location>
</feature>
<feature type="short sequence motif" description="Nuclear localization signal" evidence="1">
    <location>
        <begin position="187"/>
        <end position="195"/>
    </location>
</feature>
<feature type="short sequence motif" description="Nuclear localization signal" evidence="1">
    <location>
        <begin position="203"/>
        <end position="216"/>
    </location>
</feature>
<feature type="compositionally biased region" description="Polar residues" evidence="2">
    <location>
        <begin position="55"/>
        <end position="64"/>
    </location>
</feature>
<name>RDRP_I70A0</name>
<accession>Q6XT02</accession>
<sequence>MDVNPTLLFLKVPAQNAISTTFPYTGDPPYSHGTGTGYTMDTVNRTHQYSEKGKWTTNTETGAPQLNPIDGPLPEDNEPSGYAQTDCVLEAMAFLEESHPGIFENSCLETMEVVQQTRVDRLTQGRQTYDWTLNRNQPAATALANTIEVFRSNGLTANESGRLIDFLKDVMESMDKEEMEITTHFQRKRRVRDNMTKKMVTQRTIGKKKQRVNKRSYLIRALTLNTMTKDAERGKLKRRAIATPGMQIRGFVYFVETLARSICEKLEQSGLPVGGNEKKAKLANVVRKMMTNSQDTELSFTITGDNTKWNENQNPRMFLAMITYITKNQPEWFRNVLSIAPIMFSNKMARLGKGYMFESKSMKLRTQIPAEMLASIDLKYFNESTRKKIEKIRPLLIDGTASLSPGMMMGMFNMLSTVLGVSILNLGQKRYTKTTYWWDGLQSSDDFALIVNAPNHEGIQAGVDRFYRTCKLVGINMSKKKSYINRTGTFEFTSFFYRYGFVANFSMELPSFGVSGINESADMSIGVTVIKNNMINNDLGPATAQMALQLFIKDYRYTYRCHRGDTQIQTRRSFELKKLWEQTRSKAGLLVSDGGPNLYNIRNLHIPEVCLKWELMDEDYQGRLCNPLNPFVSHKEIESVNNAVVMPAHGPAKSMEYDAVATTHSWIPKRNRSILNTSQRGILEDEQMYQKCCNLFEKFFPSSSYRRPVGISSMVEAMVSRARIDARIDFESGRIKKEEFAEIMKICSTIEELRRQK</sequence>
<evidence type="ECO:0000255" key="1">
    <source>
        <dbReference type="HAMAP-Rule" id="MF_04065"/>
    </source>
</evidence>
<evidence type="ECO:0000256" key="2">
    <source>
        <dbReference type="SAM" id="MobiDB-lite"/>
    </source>
</evidence>
<keyword id="KW-1262">Eukaryotic host gene expression shutoff by virus</keyword>
<keyword id="KW-1191">Eukaryotic host transcription shutoff by virus</keyword>
<keyword id="KW-1035">Host cytoplasm</keyword>
<keyword id="KW-1190">Host gene expression shutoff by virus</keyword>
<keyword id="KW-1048">Host nucleus</keyword>
<keyword id="KW-0945">Host-virus interaction</keyword>
<keyword id="KW-1104">Inhibition of host RNA polymerase II by virus</keyword>
<keyword id="KW-0547">Nucleotide-binding</keyword>
<keyword id="KW-0548">Nucleotidyltransferase</keyword>
<keyword id="KW-0597">Phosphoprotein</keyword>
<keyword id="KW-0696">RNA-directed RNA polymerase</keyword>
<keyword id="KW-0808">Transferase</keyword>
<keyword id="KW-0693">Viral RNA replication</keyword>
<keyword id="KW-1195">Viral transcription</keyword>
<proteinExistence type="inferred from homology"/>
<organismHost>
    <name type="scientific">Aves</name>
    <dbReference type="NCBI Taxonomy" id="8782"/>
</organismHost>
<organismHost>
    <name type="scientific">Cetacea</name>
    <name type="common">whales</name>
    <dbReference type="NCBI Taxonomy" id="9721"/>
</organismHost>
<organismHost>
    <name type="scientific">Homo sapiens</name>
    <name type="common">Human</name>
    <dbReference type="NCBI Taxonomy" id="9606"/>
</organismHost>
<organismHost>
    <name type="scientific">Phocidae</name>
    <name type="common">true seals</name>
    <dbReference type="NCBI Taxonomy" id="9709"/>
</organismHost>
<organismHost>
    <name type="scientific">Sus scrofa</name>
    <name type="common">Pig</name>
    <dbReference type="NCBI Taxonomy" id="9823"/>
</organismHost>